<comment type="function">
    <text evidence="1">Core subunit of the mitochondrial membrane respiratory chain NADH dehydrogenase (Complex I) that is believed to belong to the minimal assembly required for catalysis. Complex I functions in the transfer of electrons from NADH to the respiratory chain. The immediate electron acceptor for the enzyme is believed to be ubiquinone (By similarity).</text>
</comment>
<comment type="catalytic activity">
    <reaction>
        <text>a ubiquinone + NADH + 5 H(+)(in) = a ubiquinol + NAD(+) + 4 H(+)(out)</text>
        <dbReference type="Rhea" id="RHEA:29091"/>
        <dbReference type="Rhea" id="RHEA-COMP:9565"/>
        <dbReference type="Rhea" id="RHEA-COMP:9566"/>
        <dbReference type="ChEBI" id="CHEBI:15378"/>
        <dbReference type="ChEBI" id="CHEBI:16389"/>
        <dbReference type="ChEBI" id="CHEBI:17976"/>
        <dbReference type="ChEBI" id="CHEBI:57540"/>
        <dbReference type="ChEBI" id="CHEBI:57945"/>
        <dbReference type="EC" id="7.1.1.2"/>
    </reaction>
</comment>
<comment type="subcellular location">
    <subcellularLocation>
        <location>Mitochondrion inner membrane</location>
        <topology>Multi-pass membrane protein</topology>
    </subcellularLocation>
</comment>
<comment type="similarity">
    <text evidence="3">Belongs to the complex I subunit 2 family.</text>
</comment>
<gene>
    <name type="primary">ND2</name>
</gene>
<protein>
    <recommendedName>
        <fullName>NADH-ubiquinone oxidoreductase chain 2</fullName>
        <ecNumber>7.1.1.2</ecNumber>
    </recommendedName>
    <alternativeName>
        <fullName>NADH dehydrogenase subunit 2</fullName>
    </alternativeName>
</protein>
<sequence>MFFMNFKYHWFIYFLITIFVLMMNSNNIFIQWMLMEFGTIISISLINIKSTNKTPSLIYYSVSVISSIFLFFMIIVYLSSISFTKTDTFNFMVQMMFFLKIGTFPFHFWMIYSYEMMNWKQIFLMSTLIKFIPIYMMVSMTKINSWTLYFLITNSLYISFYANKFYTLKKLLACSTIFNSFYFIFILELNKNMFIAMIILYSFNYFLLISFLNKFNIQNFNFMFYNKYQMYTFLTLMFNYSMYPIFLSFVIKWNLIFMMVSVKAYNWILFLLMISSMLMIWNYIIILKRVFLKMNFYKNNFIDDKDNKYMYHSYFALTLLSFNISFFITLNFL</sequence>
<name>NU2M_APILI</name>
<reference key="1">
    <citation type="journal article" date="1993" name="Genetics">
        <title>The mitochondrial genome of the honeybee Apis mellifera: complete sequence and genome organization.</title>
        <authorList>
            <person name="Crozier R.H."/>
            <person name="Crozier Y.C."/>
        </authorList>
    </citation>
    <scope>NUCLEOTIDE SEQUENCE [GENOMIC DNA]</scope>
    <source>
        <tissue>Thorax</tissue>
    </source>
</reference>
<reference key="2">
    <citation type="journal article" date="1996" name="Mol. Phylogenet. Evol.">
        <title>Molecular phylogenetics of honey bee subspecies (Apis mellifera L.) inferred from mitochondrial DNA sequence.</title>
        <authorList>
            <person name="Arias M.C."/>
            <person name="Sheppard W.S."/>
        </authorList>
    </citation>
    <scope>NUCLEOTIDE SEQUENCE [GENOMIC DNA] OF 1-211</scope>
    <source>
        <strain>Various strains</strain>
    </source>
</reference>
<reference key="3">
    <citation type="submission" date="1996-09" db="EMBL/GenBank/DDBJ databases">
        <authorList>
            <person name="Koulianos S."/>
            <person name="Crozier R.H."/>
        </authorList>
    </citation>
    <scope>NUCLEOTIDE SEQUENCE [GENOMIC DNA] OF 60-307</scope>
    <source>
        <strain>Haplotypes 1 to 11</strain>
    </source>
</reference>
<organism>
    <name type="scientific">Apis mellifera ligustica</name>
    <name type="common">Common honeybee</name>
    <name type="synonym">Italian honeybee</name>
    <dbReference type="NCBI Taxonomy" id="7469"/>
    <lineage>
        <taxon>Eukaryota</taxon>
        <taxon>Metazoa</taxon>
        <taxon>Ecdysozoa</taxon>
        <taxon>Arthropoda</taxon>
        <taxon>Hexapoda</taxon>
        <taxon>Insecta</taxon>
        <taxon>Pterygota</taxon>
        <taxon>Neoptera</taxon>
        <taxon>Endopterygota</taxon>
        <taxon>Hymenoptera</taxon>
        <taxon>Apocrita</taxon>
        <taxon>Aculeata</taxon>
        <taxon>Apoidea</taxon>
        <taxon>Anthophila</taxon>
        <taxon>Apidae</taxon>
        <taxon>Apis</taxon>
    </lineage>
</organism>
<proteinExistence type="inferred from homology"/>
<feature type="chain" id="PRO_0000117550" description="NADH-ubiquinone oxidoreductase chain 2">
    <location>
        <begin position="1"/>
        <end position="333"/>
    </location>
</feature>
<feature type="transmembrane region" description="Helical" evidence="2">
    <location>
        <begin position="10"/>
        <end position="30"/>
    </location>
</feature>
<feature type="transmembrane region" description="Helical" evidence="2">
    <location>
        <begin position="57"/>
        <end position="77"/>
    </location>
</feature>
<feature type="transmembrane region" description="Helical" evidence="2">
    <location>
        <begin position="91"/>
        <end position="111"/>
    </location>
</feature>
<feature type="transmembrane region" description="Helical" evidence="2">
    <location>
        <begin position="121"/>
        <end position="141"/>
    </location>
</feature>
<feature type="transmembrane region" description="Helical" evidence="2">
    <location>
        <begin position="143"/>
        <end position="163"/>
    </location>
</feature>
<feature type="transmembrane region" description="Helical" evidence="2">
    <location>
        <begin position="170"/>
        <end position="190"/>
    </location>
</feature>
<feature type="transmembrane region" description="Helical" evidence="2">
    <location>
        <begin position="192"/>
        <end position="212"/>
    </location>
</feature>
<feature type="transmembrane region" description="Helical" evidence="2">
    <location>
        <begin position="242"/>
        <end position="262"/>
    </location>
</feature>
<feature type="transmembrane region" description="Helical" evidence="2">
    <location>
        <begin position="267"/>
        <end position="287"/>
    </location>
</feature>
<feature type="transmembrane region" description="Helical" evidence="2">
    <location>
        <begin position="313"/>
        <end position="333"/>
    </location>
</feature>
<feature type="sequence variant" description="In strain: ssp. adansonii, ssp. capensis, ssp. carnica, ssp. iberica, ssp. intermissa, ssp. lamarckii, ssp. macedonica, ssp. meda, ssp. monticola, ssp. sahariensis, ssp. scutellata and ssp. sicula.">
    <original>F</original>
    <variation>L</variation>
    <location>
        <position position="14"/>
    </location>
</feature>
<feature type="sequence variant" description="In haplotype 9.">
    <original>V</original>
    <variation>M</variation>
    <location>
        <position position="62"/>
    </location>
</feature>
<feature type="sequence variant" description="In haplotypes 3, 5, 6, 7 and 10.">
    <original>T</original>
    <variation>I</variation>
    <location>
        <position position="84"/>
    </location>
</feature>
<feature type="sequence variant" description="In haplotype 4, MELLI1 and MELLI2.">
    <original>V</original>
    <variation>I</variation>
    <location>
        <position position="138"/>
    </location>
</feature>
<feature type="sequence variant" description="In strain: ssp. lamarckii.">
    <original>K</original>
    <variation>S</variation>
    <location>
        <position position="142"/>
    </location>
</feature>
<feature type="sequence variant" description="In strain: MELLI1.">
    <original>I</original>
    <variation>T</variation>
    <location>
        <position position="158"/>
    </location>
</feature>
<feature type="sequence variant" description="In strain: ssp. carnica.">
    <original>F</original>
    <variation>L</variation>
    <location>
        <position position="203"/>
    </location>
</feature>
<feature type="sequence variant" description="In haplotype 6.">
    <original>V</original>
    <variation>D</variation>
    <location>
        <position position="262"/>
    </location>
</feature>
<dbReference type="EC" id="7.1.1.2"/>
<dbReference type="EMBL" id="L06178">
    <property type="protein sequence ID" value="AAB96798.1"/>
    <property type="molecule type" value="Genomic_DNA"/>
</dbReference>
<dbReference type="EMBL" id="U35743">
    <property type="protein sequence ID" value="AAB38223.1"/>
    <property type="molecule type" value="Genomic_DNA"/>
</dbReference>
<dbReference type="EMBL" id="U35744">
    <property type="protein sequence ID" value="AAB38224.1"/>
    <property type="molecule type" value="Genomic_DNA"/>
</dbReference>
<dbReference type="EMBL" id="U35745">
    <property type="protein sequence ID" value="AAB38225.1"/>
    <property type="molecule type" value="Genomic_DNA"/>
</dbReference>
<dbReference type="EMBL" id="U35746">
    <property type="protein sequence ID" value="AAB38226.1"/>
    <property type="molecule type" value="Genomic_DNA"/>
</dbReference>
<dbReference type="EMBL" id="U35747">
    <property type="protein sequence ID" value="AAB38227.1"/>
    <property type="molecule type" value="Genomic_DNA"/>
</dbReference>
<dbReference type="EMBL" id="U35748">
    <property type="protein sequence ID" value="AAD12744.1"/>
    <property type="molecule type" value="Genomic_DNA"/>
</dbReference>
<dbReference type="EMBL" id="U35749">
    <property type="protein sequence ID" value="AAD12745.1"/>
    <property type="molecule type" value="Genomic_DNA"/>
</dbReference>
<dbReference type="EMBL" id="U35750">
    <property type="protein sequence ID" value="AAB38228.1"/>
    <property type="molecule type" value="Genomic_DNA"/>
</dbReference>
<dbReference type="EMBL" id="U35751">
    <property type="protein sequence ID" value="AAB38229.1"/>
    <property type="molecule type" value="Genomic_DNA"/>
</dbReference>
<dbReference type="EMBL" id="U35752">
    <property type="protein sequence ID" value="AAB38230.1"/>
    <property type="molecule type" value="Genomic_DNA"/>
</dbReference>
<dbReference type="EMBL" id="U35753">
    <property type="protein sequence ID" value="AAB38231.1"/>
    <property type="molecule type" value="Genomic_DNA"/>
</dbReference>
<dbReference type="EMBL" id="U35754">
    <property type="protein sequence ID" value="AAB38232.1"/>
    <property type="molecule type" value="Genomic_DNA"/>
</dbReference>
<dbReference type="EMBL" id="U35755">
    <property type="protein sequence ID" value="AAB38233.1"/>
    <property type="molecule type" value="Genomic_DNA"/>
</dbReference>
<dbReference type="EMBL" id="U35756">
    <property type="protein sequence ID" value="AAB38234.1"/>
    <property type="molecule type" value="Genomic_DNA"/>
</dbReference>
<dbReference type="EMBL" id="U35757">
    <property type="protein sequence ID" value="AAB38235.1"/>
    <property type="molecule type" value="Genomic_DNA"/>
</dbReference>
<dbReference type="EMBL" id="U35758">
    <property type="protein sequence ID" value="AAB38236.1"/>
    <property type="molecule type" value="Genomic_DNA"/>
</dbReference>
<dbReference type="EMBL" id="U35759">
    <property type="protein sequence ID" value="AAB38237.1"/>
    <property type="molecule type" value="Genomic_DNA"/>
</dbReference>
<dbReference type="EMBL" id="U35760">
    <property type="protein sequence ID" value="AAB38238.1"/>
    <property type="molecule type" value="Genomic_DNA"/>
</dbReference>
<dbReference type="EMBL" id="U35761">
    <property type="protein sequence ID" value="AAB38239.1"/>
    <property type="molecule type" value="Genomic_DNA"/>
</dbReference>
<dbReference type="EMBL" id="U35762">
    <property type="protein sequence ID" value="AAB38241.1"/>
    <property type="molecule type" value="Genomic_DNA"/>
</dbReference>
<dbReference type="EMBL" id="U35763">
    <property type="protein sequence ID" value="AAB38242.1"/>
    <property type="molecule type" value="Genomic_DNA"/>
</dbReference>
<dbReference type="EMBL" id="U35764">
    <property type="protein sequence ID" value="AAB38243.1"/>
    <property type="molecule type" value="Genomic_DNA"/>
</dbReference>
<dbReference type="EMBL" id="U35765">
    <property type="protein sequence ID" value="AAB38244.1"/>
    <property type="molecule type" value="Genomic_DNA"/>
</dbReference>
<dbReference type="EMBL" id="U72279">
    <property type="protein sequence ID" value="AAB41177.1"/>
    <property type="molecule type" value="Genomic_DNA"/>
</dbReference>
<dbReference type="EMBL" id="U72280">
    <property type="protein sequence ID" value="AAB41178.1"/>
    <property type="molecule type" value="Genomic_DNA"/>
</dbReference>
<dbReference type="EMBL" id="U72281">
    <property type="protein sequence ID" value="AAB41179.1"/>
    <property type="molecule type" value="Genomic_DNA"/>
</dbReference>
<dbReference type="EMBL" id="U72282">
    <property type="protein sequence ID" value="AAB41180.1"/>
    <property type="molecule type" value="Genomic_DNA"/>
</dbReference>
<dbReference type="EMBL" id="U72283">
    <property type="protein sequence ID" value="AAB41181.1"/>
    <property type="molecule type" value="Genomic_DNA"/>
</dbReference>
<dbReference type="EMBL" id="U72284">
    <property type="protein sequence ID" value="AAB41182.1"/>
    <property type="molecule type" value="Genomic_DNA"/>
</dbReference>
<dbReference type="EMBL" id="U72285">
    <property type="protein sequence ID" value="AAB41183.1"/>
    <property type="molecule type" value="Genomic_DNA"/>
</dbReference>
<dbReference type="EMBL" id="U72286">
    <property type="protein sequence ID" value="AAB41184.1"/>
    <property type="molecule type" value="Genomic_DNA"/>
</dbReference>
<dbReference type="EMBL" id="U72287">
    <property type="protein sequence ID" value="AAB41185.1"/>
    <property type="molecule type" value="Genomic_DNA"/>
</dbReference>
<dbReference type="EMBL" id="U72288">
    <property type="protein sequence ID" value="AAB41186.1"/>
    <property type="molecule type" value="Genomic_DNA"/>
</dbReference>
<dbReference type="EMBL" id="U72289">
    <property type="protein sequence ID" value="AAB41187.1"/>
    <property type="molecule type" value="Genomic_DNA"/>
</dbReference>
<dbReference type="RefSeq" id="NP_008082.1">
    <property type="nucleotide sequence ID" value="NC_001566.1"/>
</dbReference>
<dbReference type="SMR" id="P34849"/>
<dbReference type="GeneID" id="807701"/>
<dbReference type="CTD" id="4536"/>
<dbReference type="GO" id="GO:0005743">
    <property type="term" value="C:mitochondrial inner membrane"/>
    <property type="evidence" value="ECO:0007669"/>
    <property type="project" value="UniProtKB-SubCell"/>
</dbReference>
<dbReference type="GO" id="GO:0008137">
    <property type="term" value="F:NADH dehydrogenase (ubiquinone) activity"/>
    <property type="evidence" value="ECO:0007669"/>
    <property type="project" value="UniProtKB-EC"/>
</dbReference>
<dbReference type="GO" id="GO:0006120">
    <property type="term" value="P:mitochondrial electron transport, NADH to ubiquinone"/>
    <property type="evidence" value="ECO:0007669"/>
    <property type="project" value="TreeGrafter"/>
</dbReference>
<dbReference type="InterPro" id="IPR050175">
    <property type="entry name" value="Complex_I_Subunit_2"/>
</dbReference>
<dbReference type="PANTHER" id="PTHR46552">
    <property type="entry name" value="NADH-UBIQUINONE OXIDOREDUCTASE CHAIN 2"/>
    <property type="match status" value="1"/>
</dbReference>
<dbReference type="PANTHER" id="PTHR46552:SF1">
    <property type="entry name" value="NADH-UBIQUINONE OXIDOREDUCTASE CHAIN 2"/>
    <property type="match status" value="1"/>
</dbReference>
<keyword id="KW-0249">Electron transport</keyword>
<keyword id="KW-0472">Membrane</keyword>
<keyword id="KW-0496">Mitochondrion</keyword>
<keyword id="KW-0999">Mitochondrion inner membrane</keyword>
<keyword id="KW-0520">NAD</keyword>
<keyword id="KW-0679">Respiratory chain</keyword>
<keyword id="KW-1278">Translocase</keyword>
<keyword id="KW-0812">Transmembrane</keyword>
<keyword id="KW-1133">Transmembrane helix</keyword>
<keyword id="KW-0813">Transport</keyword>
<keyword id="KW-0830">Ubiquinone</keyword>
<evidence type="ECO:0000250" key="1"/>
<evidence type="ECO:0000255" key="2"/>
<evidence type="ECO:0000305" key="3"/>
<geneLocation type="mitochondrion"/>
<accession>P34849</accession>
<accession>P92496</accession>
<accession>P92497</accession>
<accession>P92502</accession>
<accession>P92886</accession>
<accession>P92907</accession>
<accession>Q33785</accession>
<accession>Q33786</accession>
<accession>Q33787</accession>
<accession>Q33788</accession>
<accession>Q36885</accession>